<organism>
    <name type="scientific">Meyerozyma guilliermondii (strain ATCC 6260 / CBS 566 / DSM 6381 / JCM 1539 / NBRC 10279 / NRRL Y-324)</name>
    <name type="common">Yeast</name>
    <name type="synonym">Candida guilliermondii</name>
    <dbReference type="NCBI Taxonomy" id="294746"/>
    <lineage>
        <taxon>Eukaryota</taxon>
        <taxon>Fungi</taxon>
        <taxon>Dikarya</taxon>
        <taxon>Ascomycota</taxon>
        <taxon>Saccharomycotina</taxon>
        <taxon>Pichiomycetes</taxon>
        <taxon>Debaryomycetaceae</taxon>
        <taxon>Meyerozyma</taxon>
    </lineage>
</organism>
<accession>A5DJK0</accession>
<protein>
    <recommendedName>
        <fullName>Altered inheritance of mitochondria protein 24, mitochondrial</fullName>
    </recommendedName>
</protein>
<comment type="subcellular location">
    <subcellularLocation>
        <location evidence="1">Mitochondrion</location>
    </subcellularLocation>
</comment>
<comment type="similarity">
    <text evidence="3">Belongs to the AIM24 family.</text>
</comment>
<name>AIM24_PICGU</name>
<keyword id="KW-0496">Mitochondrion</keyword>
<keyword id="KW-1185">Reference proteome</keyword>
<keyword id="KW-0809">Transit peptide</keyword>
<evidence type="ECO:0000250" key="1"/>
<evidence type="ECO:0000255" key="2"/>
<evidence type="ECO:0000305" key="3"/>
<sequence>MNISLRCHGHMSRRYISIIPTSAVGSLAIGSKASETEFTTKLDQVNELNSPQFKAVGQPPSVLAVHGTPSVPLYIKKGSIMSIYGVQGALLDNISSRLSLFAPIRSFFMGNHNSAYQRVVSTSPFSLLISSTSKKLFGRSAQKTFAVMNLEGTQDWAIINNNAIHAYFGTSLIRRLHLIPRKISKRFAKASGLPLPTNTGLFKWYRPGYTLLSGRGTVALVGGGNIYNVHLEDGEQAVVSKNNLLGLTVNGPHDIQNSVFQYRSNLKSNDLTIAGEKKKINPFESFSHFMSYLQMITVSGFNFLKDSISRSVRYIEGTGDFVVVTGPRDLLLQSGVPQSNLLNRAAPDQFTQSSITPKETTADFLNYVTIDKGKTKIESTPDFRKRQ</sequence>
<proteinExistence type="inferred from homology"/>
<gene>
    <name type="primary">AIM24</name>
    <name type="ORF">PGUG_03451</name>
</gene>
<dbReference type="EMBL" id="CH408158">
    <property type="protein sequence ID" value="EDK39353.2"/>
    <property type="molecule type" value="Genomic_DNA"/>
</dbReference>
<dbReference type="RefSeq" id="XP_001484070.1">
    <property type="nucleotide sequence ID" value="XM_001484020.1"/>
</dbReference>
<dbReference type="FunCoup" id="A5DJK0">
    <property type="interactions" value="13"/>
</dbReference>
<dbReference type="GeneID" id="5125992"/>
<dbReference type="KEGG" id="pgu:PGUG_03451"/>
<dbReference type="VEuPathDB" id="FungiDB:PGUG_03451"/>
<dbReference type="eggNOG" id="ENOG502RXC5">
    <property type="taxonomic scope" value="Eukaryota"/>
</dbReference>
<dbReference type="HOGENOM" id="CLU_040665_0_0_1"/>
<dbReference type="InParanoid" id="A5DJK0"/>
<dbReference type="OMA" id="NGPYDLQ"/>
<dbReference type="OrthoDB" id="5295771at2759"/>
<dbReference type="Proteomes" id="UP000001997">
    <property type="component" value="Unassembled WGS sequence"/>
</dbReference>
<dbReference type="GO" id="GO:0005743">
    <property type="term" value="C:mitochondrial inner membrane"/>
    <property type="evidence" value="ECO:0007669"/>
    <property type="project" value="TreeGrafter"/>
</dbReference>
<dbReference type="GO" id="GO:0007007">
    <property type="term" value="P:inner mitochondrial membrane organization"/>
    <property type="evidence" value="ECO:0007669"/>
    <property type="project" value="TreeGrafter"/>
</dbReference>
<dbReference type="Gene3D" id="3.60.160.10">
    <property type="entry name" value="Mitochondrial biogenesis AIM24"/>
    <property type="match status" value="1"/>
</dbReference>
<dbReference type="InterPro" id="IPR002838">
    <property type="entry name" value="AIM24"/>
</dbReference>
<dbReference type="InterPro" id="IPR036983">
    <property type="entry name" value="AIM24_sf"/>
</dbReference>
<dbReference type="PANTHER" id="PTHR36959">
    <property type="entry name" value="ALTERED INHERITANCE OF MITOCHONDRIA PROTEIN 24, MITOCHONDRIAL"/>
    <property type="match status" value="1"/>
</dbReference>
<dbReference type="PANTHER" id="PTHR36959:SF2">
    <property type="entry name" value="ALTERED INHERITANCE OF MITOCHONDRIA PROTEIN 24, MITOCHONDRIAL"/>
    <property type="match status" value="1"/>
</dbReference>
<dbReference type="Pfam" id="PF01987">
    <property type="entry name" value="AIM24"/>
    <property type="match status" value="1"/>
</dbReference>
<reference key="1">
    <citation type="journal article" date="2009" name="Nature">
        <title>Evolution of pathogenicity and sexual reproduction in eight Candida genomes.</title>
        <authorList>
            <person name="Butler G."/>
            <person name="Rasmussen M.D."/>
            <person name="Lin M.F."/>
            <person name="Santos M.A.S."/>
            <person name="Sakthikumar S."/>
            <person name="Munro C.A."/>
            <person name="Rheinbay E."/>
            <person name="Grabherr M."/>
            <person name="Forche A."/>
            <person name="Reedy J.L."/>
            <person name="Agrafioti I."/>
            <person name="Arnaud M.B."/>
            <person name="Bates S."/>
            <person name="Brown A.J.P."/>
            <person name="Brunke S."/>
            <person name="Costanzo M.C."/>
            <person name="Fitzpatrick D.A."/>
            <person name="de Groot P.W.J."/>
            <person name="Harris D."/>
            <person name="Hoyer L.L."/>
            <person name="Hube B."/>
            <person name="Klis F.M."/>
            <person name="Kodira C."/>
            <person name="Lennard N."/>
            <person name="Logue M.E."/>
            <person name="Martin R."/>
            <person name="Neiman A.M."/>
            <person name="Nikolaou E."/>
            <person name="Quail M.A."/>
            <person name="Quinn J."/>
            <person name="Santos M.C."/>
            <person name="Schmitzberger F.F."/>
            <person name="Sherlock G."/>
            <person name="Shah P."/>
            <person name="Silverstein K.A.T."/>
            <person name="Skrzypek M.S."/>
            <person name="Soll D."/>
            <person name="Staggs R."/>
            <person name="Stansfield I."/>
            <person name="Stumpf M.P.H."/>
            <person name="Sudbery P.E."/>
            <person name="Srikantha T."/>
            <person name="Zeng Q."/>
            <person name="Berman J."/>
            <person name="Berriman M."/>
            <person name="Heitman J."/>
            <person name="Gow N.A.R."/>
            <person name="Lorenz M.C."/>
            <person name="Birren B.W."/>
            <person name="Kellis M."/>
            <person name="Cuomo C.A."/>
        </authorList>
    </citation>
    <scope>NUCLEOTIDE SEQUENCE [LARGE SCALE GENOMIC DNA]</scope>
    <source>
        <strain>ATCC 6260 / CBS 566 / DSM 6381 / JCM 1539 / NBRC 10279 / NRRL Y-324</strain>
    </source>
</reference>
<feature type="transit peptide" description="Mitochondrion" evidence="2">
    <location>
        <begin position="1"/>
        <end position="23"/>
    </location>
</feature>
<feature type="chain" id="PRO_0000399586" description="Altered inheritance of mitochondria protein 24, mitochondrial">
    <location>
        <begin position="24"/>
        <end position="387"/>
    </location>
</feature>